<keyword id="KW-0997">Cell inner membrane</keyword>
<keyword id="KW-1003">Cell membrane</keyword>
<keyword id="KW-0472">Membrane</keyword>
<keyword id="KW-0520">NAD</keyword>
<keyword id="KW-0874">Quinone</keyword>
<keyword id="KW-1278">Translocase</keyword>
<keyword id="KW-0813">Transport</keyword>
<keyword id="KW-0830">Ubiquinone</keyword>
<protein>
    <recommendedName>
        <fullName evidence="1">NADH-quinone oxidoreductase subunit D</fullName>
        <ecNumber evidence="1">7.1.1.-</ecNumber>
    </recommendedName>
    <alternativeName>
        <fullName evidence="1">NADH dehydrogenase I subunit D</fullName>
    </alternativeName>
    <alternativeName>
        <fullName evidence="1">NDH-1 subunit D</fullName>
    </alternativeName>
</protein>
<evidence type="ECO:0000255" key="1">
    <source>
        <dbReference type="HAMAP-Rule" id="MF_01358"/>
    </source>
</evidence>
<reference key="1">
    <citation type="journal article" date="2006" name="Proc. Natl. Acad. Sci. U.S.A.">
        <title>The complete genome sequence of a chronic atrophic gastritis Helicobacter pylori strain: evolution during disease progression.</title>
        <authorList>
            <person name="Oh J.D."/>
            <person name="Kling-Baeckhed H."/>
            <person name="Giannakis M."/>
            <person name="Xu J."/>
            <person name="Fulton R.S."/>
            <person name="Fulton L.A."/>
            <person name="Cordum H.S."/>
            <person name="Wang C."/>
            <person name="Elliott G."/>
            <person name="Edwards J."/>
            <person name="Mardis E.R."/>
            <person name="Engstrand L.G."/>
            <person name="Gordon J.I."/>
        </authorList>
    </citation>
    <scope>NUCLEOTIDE SEQUENCE [LARGE SCALE GENOMIC DNA]</scope>
    <source>
        <strain>HPAG1</strain>
    </source>
</reference>
<proteinExistence type="inferred from homology"/>
<name>NUOD_HELPH</name>
<organism>
    <name type="scientific">Helicobacter pylori (strain HPAG1)</name>
    <dbReference type="NCBI Taxonomy" id="357544"/>
    <lineage>
        <taxon>Bacteria</taxon>
        <taxon>Pseudomonadati</taxon>
        <taxon>Campylobacterota</taxon>
        <taxon>Epsilonproteobacteria</taxon>
        <taxon>Campylobacterales</taxon>
        <taxon>Helicobacteraceae</taxon>
        <taxon>Helicobacter</taxon>
    </lineage>
</organism>
<gene>
    <name evidence="1" type="primary">nuoD</name>
    <name type="ordered locus">HPAG1_1207</name>
</gene>
<feature type="chain" id="PRO_0000371879" description="NADH-quinone oxidoreductase subunit D">
    <location>
        <begin position="1"/>
        <end position="409"/>
    </location>
</feature>
<sequence>MAQNFTKLNPQFENIIFEHDDNQMILNFGPQHPSSHGQLRLILELEGEKIIKATPEIGYLHRGCEKLGENMTYNEYMPTTDRLDYTSSTSNNYAYAYAVETLLNLEIPRRAQVIRTILLELNRMISHIFFISVHALDVGAMSVFLYAFKTREYGLDLMEDYCGARLTHNAIRIGGVPLDLPPNWLEGLKKFLGEMRECKKLIQGLLDKNRIWRMRLENVGVVTQKMAQSWGMSGIMLRGTGIAYDIRKEEPYELYKELDFDVPVGNYGDSYDRYCLYMLEIDESIRIIEQLIPMYAKTDTPIMAQNPHYISAPKEDIMTQNYALMQHFVLVAQGMRPPIGEVYAPTESPKGELGFFIHSEGEPYPHRLKIRAPSFYHIGALSDILVGQYLADAVTVIGSTNAVFGEVDR</sequence>
<comment type="function">
    <text evidence="1">NDH-1 shuttles electrons from NADH, via FMN and iron-sulfur (Fe-S) centers, to quinones in the respiratory chain. The immediate electron acceptor for the enzyme in this species is believed to be ubiquinone. Couples the redox reaction to proton translocation (for every two electrons transferred, four hydrogen ions are translocated across the cytoplasmic membrane), and thus conserves the redox energy in a proton gradient.</text>
</comment>
<comment type="catalytic activity">
    <reaction evidence="1">
        <text>a quinone + NADH + 5 H(+)(in) = a quinol + NAD(+) + 4 H(+)(out)</text>
        <dbReference type="Rhea" id="RHEA:57888"/>
        <dbReference type="ChEBI" id="CHEBI:15378"/>
        <dbReference type="ChEBI" id="CHEBI:24646"/>
        <dbReference type="ChEBI" id="CHEBI:57540"/>
        <dbReference type="ChEBI" id="CHEBI:57945"/>
        <dbReference type="ChEBI" id="CHEBI:132124"/>
    </reaction>
</comment>
<comment type="subunit">
    <text evidence="1">NDH-1 is composed of 14 different subunits. Subunits NuoB, C, D, E, F, and G constitute the peripheral sector of the complex.</text>
</comment>
<comment type="subcellular location">
    <subcellularLocation>
        <location evidence="1">Cell inner membrane</location>
        <topology evidence="1">Peripheral membrane protein</topology>
        <orientation evidence="1">Cytoplasmic side</orientation>
    </subcellularLocation>
</comment>
<comment type="similarity">
    <text evidence="1">Belongs to the complex I 49 kDa subunit family.</text>
</comment>
<dbReference type="EC" id="7.1.1.-" evidence="1"/>
<dbReference type="EMBL" id="CP000241">
    <property type="protein sequence ID" value="ABF85274.1"/>
    <property type="molecule type" value="Genomic_DNA"/>
</dbReference>
<dbReference type="RefSeq" id="WP_000068241.1">
    <property type="nucleotide sequence ID" value="NC_008086.1"/>
</dbReference>
<dbReference type="SMR" id="Q1CRZ8"/>
<dbReference type="KEGG" id="hpa:HPAG1_1207"/>
<dbReference type="HOGENOM" id="CLU_015134_1_2_7"/>
<dbReference type="GO" id="GO:0005886">
    <property type="term" value="C:plasma membrane"/>
    <property type="evidence" value="ECO:0007669"/>
    <property type="project" value="UniProtKB-SubCell"/>
</dbReference>
<dbReference type="GO" id="GO:0051287">
    <property type="term" value="F:NAD binding"/>
    <property type="evidence" value="ECO:0007669"/>
    <property type="project" value="InterPro"/>
</dbReference>
<dbReference type="GO" id="GO:0050136">
    <property type="term" value="F:NADH:ubiquinone reductase (non-electrogenic) activity"/>
    <property type="evidence" value="ECO:0007669"/>
    <property type="project" value="UniProtKB-UniRule"/>
</dbReference>
<dbReference type="GO" id="GO:0048038">
    <property type="term" value="F:quinone binding"/>
    <property type="evidence" value="ECO:0007669"/>
    <property type="project" value="UniProtKB-KW"/>
</dbReference>
<dbReference type="Gene3D" id="1.10.645.10">
    <property type="entry name" value="Cytochrome-c3 Hydrogenase, chain B"/>
    <property type="match status" value="1"/>
</dbReference>
<dbReference type="HAMAP" id="MF_01358">
    <property type="entry name" value="NDH1_NuoD"/>
    <property type="match status" value="1"/>
</dbReference>
<dbReference type="InterPro" id="IPR001135">
    <property type="entry name" value="NADH_Q_OxRdtase_suD"/>
</dbReference>
<dbReference type="InterPro" id="IPR022885">
    <property type="entry name" value="NDH1_su_D/H"/>
</dbReference>
<dbReference type="InterPro" id="IPR029014">
    <property type="entry name" value="NiFe-Hase_large"/>
</dbReference>
<dbReference type="NCBIfam" id="TIGR01962">
    <property type="entry name" value="NuoD"/>
    <property type="match status" value="1"/>
</dbReference>
<dbReference type="NCBIfam" id="NF004739">
    <property type="entry name" value="PRK06075.1"/>
    <property type="match status" value="1"/>
</dbReference>
<dbReference type="PANTHER" id="PTHR11993:SF10">
    <property type="entry name" value="NADH DEHYDROGENASE [UBIQUINONE] IRON-SULFUR PROTEIN 2, MITOCHONDRIAL"/>
    <property type="match status" value="1"/>
</dbReference>
<dbReference type="PANTHER" id="PTHR11993">
    <property type="entry name" value="NADH-UBIQUINONE OXIDOREDUCTASE 49 KDA SUBUNIT"/>
    <property type="match status" value="1"/>
</dbReference>
<dbReference type="Pfam" id="PF00346">
    <property type="entry name" value="Complex1_49kDa"/>
    <property type="match status" value="1"/>
</dbReference>
<dbReference type="SUPFAM" id="SSF56762">
    <property type="entry name" value="HydB/Nqo4-like"/>
    <property type="match status" value="1"/>
</dbReference>
<accession>Q1CRZ8</accession>